<comment type="function">
    <text evidence="1">RNaseP catalyzes the removal of the 5'-leader sequence from pre-tRNA to produce the mature 5'-terminus. It can also cleave other RNA substrates such as 4.5S RNA. The protein component plays an auxiliary but essential role in vivo by binding to the 5'-leader sequence and broadening the substrate specificity of the ribozyme.</text>
</comment>
<comment type="catalytic activity">
    <reaction evidence="1">
        <text>Endonucleolytic cleavage of RNA, removing 5'-extranucleotides from tRNA precursor.</text>
        <dbReference type="EC" id="3.1.26.5"/>
    </reaction>
</comment>
<comment type="subunit">
    <text evidence="1">Consists of a catalytic RNA component (M1 or rnpB) and a protein subunit.</text>
</comment>
<comment type="similarity">
    <text evidence="1">Belongs to the RnpA family.</text>
</comment>
<evidence type="ECO:0000255" key="1">
    <source>
        <dbReference type="HAMAP-Rule" id="MF_00227"/>
    </source>
</evidence>
<feature type="chain" id="PRO_1000021379" description="Ribonuclease P protein component">
    <location>
        <begin position="1"/>
        <end position="120"/>
    </location>
</feature>
<dbReference type="EC" id="3.1.26.5" evidence="1"/>
<dbReference type="EMBL" id="AM167904">
    <property type="protein sequence ID" value="CAJ51024.1"/>
    <property type="molecule type" value="Genomic_DNA"/>
</dbReference>
<dbReference type="RefSeq" id="WP_012419050.1">
    <property type="nucleotide sequence ID" value="NC_010645.1"/>
</dbReference>
<dbReference type="SMR" id="Q2KTI7"/>
<dbReference type="STRING" id="360910.BAV3414"/>
<dbReference type="GeneID" id="92936771"/>
<dbReference type="KEGG" id="bav:BAV3414"/>
<dbReference type="eggNOG" id="COG0594">
    <property type="taxonomic scope" value="Bacteria"/>
</dbReference>
<dbReference type="HOGENOM" id="CLU_117179_11_1_4"/>
<dbReference type="OrthoDB" id="398329at2"/>
<dbReference type="Proteomes" id="UP000001977">
    <property type="component" value="Chromosome"/>
</dbReference>
<dbReference type="GO" id="GO:0030677">
    <property type="term" value="C:ribonuclease P complex"/>
    <property type="evidence" value="ECO:0007669"/>
    <property type="project" value="TreeGrafter"/>
</dbReference>
<dbReference type="GO" id="GO:0042781">
    <property type="term" value="F:3'-tRNA processing endoribonuclease activity"/>
    <property type="evidence" value="ECO:0007669"/>
    <property type="project" value="TreeGrafter"/>
</dbReference>
<dbReference type="GO" id="GO:0004526">
    <property type="term" value="F:ribonuclease P activity"/>
    <property type="evidence" value="ECO:0007669"/>
    <property type="project" value="UniProtKB-UniRule"/>
</dbReference>
<dbReference type="GO" id="GO:0000049">
    <property type="term" value="F:tRNA binding"/>
    <property type="evidence" value="ECO:0007669"/>
    <property type="project" value="UniProtKB-UniRule"/>
</dbReference>
<dbReference type="GO" id="GO:0001682">
    <property type="term" value="P:tRNA 5'-leader removal"/>
    <property type="evidence" value="ECO:0007669"/>
    <property type="project" value="UniProtKB-UniRule"/>
</dbReference>
<dbReference type="Gene3D" id="3.30.230.10">
    <property type="match status" value="1"/>
</dbReference>
<dbReference type="HAMAP" id="MF_00227">
    <property type="entry name" value="RNase_P"/>
    <property type="match status" value="1"/>
</dbReference>
<dbReference type="InterPro" id="IPR020568">
    <property type="entry name" value="Ribosomal_Su5_D2-typ_SF"/>
</dbReference>
<dbReference type="InterPro" id="IPR014721">
    <property type="entry name" value="Ribsml_uS5_D2-typ_fold_subgr"/>
</dbReference>
<dbReference type="InterPro" id="IPR000100">
    <property type="entry name" value="RNase_P"/>
</dbReference>
<dbReference type="InterPro" id="IPR020539">
    <property type="entry name" value="RNase_P_CS"/>
</dbReference>
<dbReference type="NCBIfam" id="NF000707">
    <property type="entry name" value="PRK00038.1"/>
    <property type="match status" value="1"/>
</dbReference>
<dbReference type="NCBIfam" id="TIGR00188">
    <property type="entry name" value="rnpA"/>
    <property type="match status" value="1"/>
</dbReference>
<dbReference type="PANTHER" id="PTHR33992">
    <property type="entry name" value="RIBONUCLEASE P PROTEIN COMPONENT"/>
    <property type="match status" value="1"/>
</dbReference>
<dbReference type="PANTHER" id="PTHR33992:SF1">
    <property type="entry name" value="RIBONUCLEASE P PROTEIN COMPONENT"/>
    <property type="match status" value="1"/>
</dbReference>
<dbReference type="Pfam" id="PF00825">
    <property type="entry name" value="Ribonuclease_P"/>
    <property type="match status" value="1"/>
</dbReference>
<dbReference type="SUPFAM" id="SSF54211">
    <property type="entry name" value="Ribosomal protein S5 domain 2-like"/>
    <property type="match status" value="1"/>
</dbReference>
<dbReference type="PROSITE" id="PS00648">
    <property type="entry name" value="RIBONUCLEASE_P"/>
    <property type="match status" value="1"/>
</dbReference>
<reference key="1">
    <citation type="journal article" date="2006" name="J. Bacteriol.">
        <title>Comparison of the genome sequence of the poultry pathogen Bordetella avium with those of B. bronchiseptica, B. pertussis, and B. parapertussis reveals extensive diversity in surface structures associated with host interaction.</title>
        <authorList>
            <person name="Sebaihia M."/>
            <person name="Preston A."/>
            <person name="Maskell D.J."/>
            <person name="Kuzmiak H."/>
            <person name="Connell T.D."/>
            <person name="King N.D."/>
            <person name="Orndorff P.E."/>
            <person name="Miyamoto D.M."/>
            <person name="Thomson N.R."/>
            <person name="Harris D."/>
            <person name="Goble A."/>
            <person name="Lord A."/>
            <person name="Murphy L."/>
            <person name="Quail M.A."/>
            <person name="Rutter S."/>
            <person name="Squares R."/>
            <person name="Squares S."/>
            <person name="Woodward J."/>
            <person name="Parkhill J."/>
            <person name="Temple L.M."/>
        </authorList>
    </citation>
    <scope>NUCLEOTIDE SEQUENCE [LARGE SCALE GENOMIC DNA]</scope>
    <source>
        <strain>197N</strain>
    </source>
</reference>
<gene>
    <name evidence="1" type="primary">rnpA</name>
    <name type="ordered locus">BAV3414</name>
</gene>
<keyword id="KW-0255">Endonuclease</keyword>
<keyword id="KW-0378">Hydrolase</keyword>
<keyword id="KW-0540">Nuclease</keyword>
<keyword id="KW-1185">Reference proteome</keyword>
<keyword id="KW-0694">RNA-binding</keyword>
<keyword id="KW-0819">tRNA processing</keyword>
<sequence>MSCATLPAEARLHRPSEFTAALKGRRLARGALFIVSAAPATSAPACARLGLVIAKRYAALATTRNAIKRVLREAFRHRRQALPAQDYVIRLHSKVGPLSLTALKRAARTEADAHFGRIAR</sequence>
<protein>
    <recommendedName>
        <fullName evidence="1">Ribonuclease P protein component</fullName>
        <shortName evidence="1">RNase P protein</shortName>
        <shortName evidence="1">RNaseP protein</shortName>
        <ecNumber evidence="1">3.1.26.5</ecNumber>
    </recommendedName>
    <alternativeName>
        <fullName evidence="1">Protein C5</fullName>
    </alternativeName>
</protein>
<proteinExistence type="inferred from homology"/>
<organism>
    <name type="scientific">Bordetella avium (strain 197N)</name>
    <dbReference type="NCBI Taxonomy" id="360910"/>
    <lineage>
        <taxon>Bacteria</taxon>
        <taxon>Pseudomonadati</taxon>
        <taxon>Pseudomonadota</taxon>
        <taxon>Betaproteobacteria</taxon>
        <taxon>Burkholderiales</taxon>
        <taxon>Alcaligenaceae</taxon>
        <taxon>Bordetella</taxon>
    </lineage>
</organism>
<accession>Q2KTI7</accession>
<name>RNPA_BORA1</name>